<organism>
    <name type="scientific">Prochlorococcus marinus (strain SARG / CCMP1375 / SS120)</name>
    <dbReference type="NCBI Taxonomy" id="167539"/>
    <lineage>
        <taxon>Bacteria</taxon>
        <taxon>Bacillati</taxon>
        <taxon>Cyanobacteriota</taxon>
        <taxon>Cyanophyceae</taxon>
        <taxon>Synechococcales</taxon>
        <taxon>Prochlorococcaceae</taxon>
        <taxon>Prochlorococcus</taxon>
    </lineage>
</organism>
<name>TAL_PROMA</name>
<gene>
    <name evidence="2" type="primary">tal</name>
    <name type="ordered locus">Pro_0519</name>
</gene>
<sequence>MTSLLDQLSSMTVVVADTGDLEAIRTFKPQDATTNPSLILAAAQIPAYQNLIDKSLQASRQRVGSFASAKEVVDEALDEVCVTFGKEILKIIPGRVSTEVDARLSFNTQATINKARKIIDLYKKVDISKERVLIKVASTWEGIKAAEVLESEGIHCNLTLLFGFSQAVACAEAGVTLISPFVGRILDWYKAETGKDSYAGEEDPGVVSVTKIFNYYKSNNYKTEVMGASFRNIDEILELAGCDLLTIAPKFLEQLENSDSKLTRKLDSLKPLPSETKIHLEEYDFRNMLKLDRMATEKLEEGIINFSKAIEQLEQLLSKRLSYIESGSNAELSIA</sequence>
<evidence type="ECO:0000250" key="1"/>
<evidence type="ECO:0000255" key="2">
    <source>
        <dbReference type="HAMAP-Rule" id="MF_00492"/>
    </source>
</evidence>
<comment type="function">
    <text evidence="2">Transaldolase is important for the balance of metabolites in the pentose-phosphate pathway.</text>
</comment>
<comment type="catalytic activity">
    <reaction evidence="2">
        <text>D-sedoheptulose 7-phosphate + D-glyceraldehyde 3-phosphate = D-erythrose 4-phosphate + beta-D-fructose 6-phosphate</text>
        <dbReference type="Rhea" id="RHEA:17053"/>
        <dbReference type="ChEBI" id="CHEBI:16897"/>
        <dbReference type="ChEBI" id="CHEBI:57483"/>
        <dbReference type="ChEBI" id="CHEBI:57634"/>
        <dbReference type="ChEBI" id="CHEBI:59776"/>
        <dbReference type="EC" id="2.2.1.2"/>
    </reaction>
</comment>
<comment type="pathway">
    <text evidence="2">Carbohydrate degradation; pentose phosphate pathway; D-glyceraldehyde 3-phosphate and beta-D-fructose 6-phosphate from D-ribose 5-phosphate and D-xylulose 5-phosphate (non-oxidative stage): step 2/3.</text>
</comment>
<comment type="subunit">
    <text evidence="1">Homodimer.</text>
</comment>
<comment type="subcellular location">
    <subcellularLocation>
        <location evidence="2">Cytoplasm</location>
    </subcellularLocation>
</comment>
<comment type="similarity">
    <text evidence="2">Belongs to the transaldolase family. Type 1 subfamily.</text>
</comment>
<feature type="chain" id="PRO_0000173604" description="Transaldolase">
    <location>
        <begin position="1"/>
        <end position="335"/>
    </location>
</feature>
<feature type="active site" description="Schiff-base intermediate with substrate" evidence="2">
    <location>
        <position position="135"/>
    </location>
</feature>
<protein>
    <recommendedName>
        <fullName evidence="2">Transaldolase</fullName>
        <ecNumber evidence="2">2.2.1.2</ecNumber>
    </recommendedName>
</protein>
<proteinExistence type="inferred from homology"/>
<reference key="1">
    <citation type="journal article" date="2003" name="Proc. Natl. Acad. Sci. U.S.A.">
        <title>Genome sequence of the cyanobacterium Prochlorococcus marinus SS120, a nearly minimal oxyphototrophic genome.</title>
        <authorList>
            <person name="Dufresne A."/>
            <person name="Salanoubat M."/>
            <person name="Partensky F."/>
            <person name="Artiguenave F."/>
            <person name="Axmann I.M."/>
            <person name="Barbe V."/>
            <person name="Duprat S."/>
            <person name="Galperin M.Y."/>
            <person name="Koonin E.V."/>
            <person name="Le Gall F."/>
            <person name="Makarova K.S."/>
            <person name="Ostrowski M."/>
            <person name="Oztas S."/>
            <person name="Robert C."/>
            <person name="Rogozin I.B."/>
            <person name="Scanlan D.J."/>
            <person name="Tandeau de Marsac N."/>
            <person name="Weissenbach J."/>
            <person name="Wincker P."/>
            <person name="Wolf Y.I."/>
            <person name="Hess W.R."/>
        </authorList>
    </citation>
    <scope>NUCLEOTIDE SEQUENCE [LARGE SCALE GENOMIC DNA]</scope>
    <source>
        <strain>SARG / CCMP1375 / SS120</strain>
    </source>
</reference>
<dbReference type="EC" id="2.2.1.2" evidence="2"/>
<dbReference type="EMBL" id="AE017126">
    <property type="protein sequence ID" value="AAP99564.1"/>
    <property type="molecule type" value="Genomic_DNA"/>
</dbReference>
<dbReference type="RefSeq" id="NP_874912.1">
    <property type="nucleotide sequence ID" value="NC_005042.1"/>
</dbReference>
<dbReference type="RefSeq" id="WP_011124673.1">
    <property type="nucleotide sequence ID" value="NC_005042.1"/>
</dbReference>
<dbReference type="SMR" id="Q7VD64"/>
<dbReference type="STRING" id="167539.Pro_0519"/>
<dbReference type="EnsemblBacteria" id="AAP99564">
    <property type="protein sequence ID" value="AAP99564"/>
    <property type="gene ID" value="Pro_0519"/>
</dbReference>
<dbReference type="KEGG" id="pma:Pro_0519"/>
<dbReference type="PATRIC" id="fig|167539.5.peg.533"/>
<dbReference type="eggNOG" id="COG0176">
    <property type="taxonomic scope" value="Bacteria"/>
</dbReference>
<dbReference type="HOGENOM" id="CLU_047470_0_1_3"/>
<dbReference type="OrthoDB" id="9807051at2"/>
<dbReference type="UniPathway" id="UPA00115">
    <property type="reaction ID" value="UER00414"/>
</dbReference>
<dbReference type="Proteomes" id="UP000001420">
    <property type="component" value="Chromosome"/>
</dbReference>
<dbReference type="GO" id="GO:0005737">
    <property type="term" value="C:cytoplasm"/>
    <property type="evidence" value="ECO:0007669"/>
    <property type="project" value="UniProtKB-SubCell"/>
</dbReference>
<dbReference type="GO" id="GO:0004801">
    <property type="term" value="F:transaldolase activity"/>
    <property type="evidence" value="ECO:0000250"/>
    <property type="project" value="UniProtKB"/>
</dbReference>
<dbReference type="GO" id="GO:0005975">
    <property type="term" value="P:carbohydrate metabolic process"/>
    <property type="evidence" value="ECO:0007669"/>
    <property type="project" value="InterPro"/>
</dbReference>
<dbReference type="GO" id="GO:0006098">
    <property type="term" value="P:pentose-phosphate shunt"/>
    <property type="evidence" value="ECO:0007669"/>
    <property type="project" value="UniProtKB-UniRule"/>
</dbReference>
<dbReference type="CDD" id="cd00957">
    <property type="entry name" value="Transaldolase_TalAB"/>
    <property type="match status" value="1"/>
</dbReference>
<dbReference type="FunFam" id="3.20.20.70:FF:000002">
    <property type="entry name" value="Transaldolase"/>
    <property type="match status" value="1"/>
</dbReference>
<dbReference type="Gene3D" id="3.20.20.70">
    <property type="entry name" value="Aldolase class I"/>
    <property type="match status" value="1"/>
</dbReference>
<dbReference type="HAMAP" id="MF_00492">
    <property type="entry name" value="Transaldolase_1"/>
    <property type="match status" value="1"/>
</dbReference>
<dbReference type="InterPro" id="IPR013785">
    <property type="entry name" value="Aldolase_TIM"/>
</dbReference>
<dbReference type="InterPro" id="IPR001585">
    <property type="entry name" value="TAL/FSA"/>
</dbReference>
<dbReference type="InterPro" id="IPR004730">
    <property type="entry name" value="Transaldolase_1"/>
</dbReference>
<dbReference type="InterPro" id="IPR018225">
    <property type="entry name" value="Transaldolase_AS"/>
</dbReference>
<dbReference type="NCBIfam" id="NF008965">
    <property type="entry name" value="PRK12309.1"/>
    <property type="match status" value="1"/>
</dbReference>
<dbReference type="NCBIfam" id="TIGR00874">
    <property type="entry name" value="talAB"/>
    <property type="match status" value="1"/>
</dbReference>
<dbReference type="PANTHER" id="PTHR10683">
    <property type="entry name" value="TRANSALDOLASE"/>
    <property type="match status" value="1"/>
</dbReference>
<dbReference type="PANTHER" id="PTHR10683:SF18">
    <property type="entry name" value="TRANSALDOLASE"/>
    <property type="match status" value="1"/>
</dbReference>
<dbReference type="Pfam" id="PF00923">
    <property type="entry name" value="TAL_FSA"/>
    <property type="match status" value="1"/>
</dbReference>
<dbReference type="SUPFAM" id="SSF51569">
    <property type="entry name" value="Aldolase"/>
    <property type="match status" value="1"/>
</dbReference>
<dbReference type="PROSITE" id="PS01054">
    <property type="entry name" value="TRANSALDOLASE_1"/>
    <property type="match status" value="1"/>
</dbReference>
<dbReference type="PROSITE" id="PS00958">
    <property type="entry name" value="TRANSALDOLASE_2"/>
    <property type="match status" value="1"/>
</dbReference>
<keyword id="KW-0963">Cytoplasm</keyword>
<keyword id="KW-0570">Pentose shunt</keyword>
<keyword id="KW-1185">Reference proteome</keyword>
<keyword id="KW-0704">Schiff base</keyword>
<keyword id="KW-0808">Transferase</keyword>
<accession>Q7VD64</accession>